<feature type="chain" id="PRO_0000114644" description="Dynein beta chain, ciliary">
    <location>
        <begin position="1"/>
        <end position="4466"/>
    </location>
</feature>
<feature type="region of interest" description="Stem" evidence="1">
    <location>
        <begin position="1"/>
        <end position="1813"/>
    </location>
</feature>
<feature type="region of interest" description="AAA 1" evidence="1">
    <location>
        <begin position="1814"/>
        <end position="2035"/>
    </location>
</feature>
<feature type="region of interest" description="AAA 2" evidence="1">
    <location>
        <begin position="2095"/>
        <end position="2316"/>
    </location>
</feature>
<feature type="region of interest" description="AAA 3" evidence="1">
    <location>
        <begin position="2422"/>
        <end position="2669"/>
    </location>
</feature>
<feature type="region of interest" description="AAA 4" evidence="1">
    <location>
        <begin position="2767"/>
        <end position="3016"/>
    </location>
</feature>
<feature type="region of interest" description="Stalk" evidence="1">
    <location>
        <begin position="3033"/>
        <end position="3325"/>
    </location>
</feature>
<feature type="region of interest" description="AAA 5" evidence="1">
    <location>
        <begin position="3409"/>
        <end position="3636"/>
    </location>
</feature>
<feature type="region of interest" description="AAA 6" evidence="1">
    <location>
        <begin position="3846"/>
        <end position="4072"/>
    </location>
</feature>
<feature type="coiled-coil region" evidence="2">
    <location>
        <begin position="482"/>
        <end position="502"/>
    </location>
</feature>
<feature type="coiled-coil region" evidence="2">
    <location>
        <begin position="627"/>
        <end position="643"/>
    </location>
</feature>
<feature type="coiled-coil region" evidence="2">
    <location>
        <begin position="734"/>
        <end position="805"/>
    </location>
</feature>
<feature type="coiled-coil region" evidence="2">
    <location>
        <begin position="1036"/>
        <end position="1056"/>
    </location>
</feature>
<feature type="coiled-coil region" evidence="2">
    <location>
        <begin position="1306"/>
        <end position="1337"/>
    </location>
</feature>
<feature type="coiled-coil region" evidence="2">
    <location>
        <begin position="1443"/>
        <end position="1468"/>
    </location>
</feature>
<feature type="coiled-coil region" evidence="2">
    <location>
        <begin position="3033"/>
        <end position="3134"/>
    </location>
</feature>
<feature type="coiled-coil region" evidence="2">
    <location>
        <begin position="3263"/>
        <end position="3325"/>
    </location>
</feature>
<feature type="coiled-coil region" evidence="2">
    <location>
        <begin position="3573"/>
        <end position="3642"/>
    </location>
</feature>
<feature type="binding site" evidence="2">
    <location>
        <begin position="154"/>
        <end position="161"/>
    </location>
    <ligand>
        <name>ATP</name>
        <dbReference type="ChEBI" id="CHEBI:30616"/>
    </ligand>
</feature>
<feature type="binding site" evidence="2">
    <location>
        <begin position="1852"/>
        <end position="1859"/>
    </location>
    <ligand>
        <name>ATP</name>
        <dbReference type="ChEBI" id="CHEBI:30616"/>
    </ligand>
</feature>
<feature type="binding site" evidence="2">
    <location>
        <begin position="2133"/>
        <end position="2140"/>
    </location>
    <ligand>
        <name>ATP</name>
        <dbReference type="ChEBI" id="CHEBI:30616"/>
    </ligand>
</feature>
<feature type="binding site" evidence="2">
    <location>
        <begin position="2460"/>
        <end position="2467"/>
    </location>
    <ligand>
        <name>ATP</name>
        <dbReference type="ChEBI" id="CHEBI:30616"/>
    </ligand>
</feature>
<feature type="binding site" evidence="2">
    <location>
        <begin position="2805"/>
        <end position="2812"/>
    </location>
    <ligand>
        <name>ATP</name>
        <dbReference type="ChEBI" id="CHEBI:30616"/>
    </ligand>
</feature>
<name>DYHC_HELCR</name>
<organism>
    <name type="scientific">Heliocidaris crassispina</name>
    <name type="common">Sea urchin</name>
    <name type="synonym">Anthocidaris crassispina</name>
    <dbReference type="NCBI Taxonomy" id="1043166"/>
    <lineage>
        <taxon>Eukaryota</taxon>
        <taxon>Metazoa</taxon>
        <taxon>Echinodermata</taxon>
        <taxon>Eleutherozoa</taxon>
        <taxon>Echinozoa</taxon>
        <taxon>Echinoidea</taxon>
        <taxon>Euechinoidea</taxon>
        <taxon>Echinacea</taxon>
        <taxon>Camarodonta</taxon>
        <taxon>Echinidea</taxon>
        <taxon>Echinometridae</taxon>
        <taxon>Heliocidaris</taxon>
    </lineage>
</organism>
<proteinExistence type="evidence at protein level"/>
<accession>P39057</accession>
<evidence type="ECO:0000250" key="1"/>
<evidence type="ECO:0000255" key="2"/>
<evidence type="ECO:0000305" key="3"/>
<comment type="function">
    <text>Force generating protein of eukaryotic cilia and flagella. Produces force towards the minus ends of microtubules. Dynein has ATPase activity; the force-producing power stroke is thought to occur on release of ADP.</text>
</comment>
<comment type="subunit">
    <text>Consists of at least two heavy chains (alpha and beta), three intermediate chains and several light chains.</text>
</comment>
<comment type="subcellular location">
    <subcellularLocation>
        <location>Cell projection</location>
        <location>Cilium</location>
        <location>Flagellum</location>
    </subcellularLocation>
    <subcellularLocation>
        <location>Cytoplasm</location>
        <location>Cytoskeleton</location>
        <location>Flagellum axoneme</location>
    </subcellularLocation>
</comment>
<comment type="domain">
    <text>Dynein heavy chains probably consist of an N-terminal stem (which binds cargo and interacts with other dynein components), and the head or motor domain. The motor contains six tandemly-linked AAA domains in the head, which form a ring. A stalk-like structure (formed by two of the coiled coil domains) protrudes between AAA 4 and AAA 5 and terminates in a microtubule-binding site. A seventh domain may also contribute to this ring; it is not clear whether the N-terminus or the C-terminus forms this extra domain. There are four well-conserved and two non-conserved ATPase sites, one per AAA domain. Probably only one of these (within AAA 1) actually hydrolyzes ATP, the others may serve a regulatory function.</text>
</comment>
<comment type="similarity">
    <text evidence="3">Belongs to the dynein heavy chain family.</text>
</comment>
<sequence>MGDVVDARLDFISEYILKSYKLKPDKWTKCINVEENKILMLEFLEKADNPQLVFTVNPAGLITPSYEFPSALKNTKAIYFIKKGREPVGKDNIKTNLVYGDLSYTPLEQLSALVDEVLVPLLANPRNHEQWPVVVSQDVLRHVHNLKSSVYVVAGQVKGKTLLPLPVGSEKVETAAGSEEKDDSYDRSLVHAIESVIIDWTHQIRDVLKRDSAQPLLEGLNPGPMVEINFWKAKCENLDCIFQQLRDPKVRKMKELLERTQSSYLPSFNNIERDVEAALTEAQDINIHLKPLVYQIESMDELEFSDLTPRLAPILHTVCLIWSNSDYYNTAPRVIVLLQEICNLLIDLCRTFLDPSEIFKLEPEESLEKVRGALTVLKNWRELYDEHRAKLKDYFKDGKEVKEWEFASPLVFTRMDNFIRRIETIQSLFETNVEFSKLEKTEMGSMKGRMLSQQVEKIHEEFQECAKVFTERPYDGLDPTCQEFLEDYEEFEKKVFDLDRRLGSILCQGFDDCCGLEAAFKMLDCYGPLLDRPVIRNDFECKYPIVLMLYDQELDQSKEIYDEHMRVEEANGNAPLNKNMPDVAGQLKWSAQLRDRISKPMGSLKHMEHPTGVRRILESEDAKVIFQKYEEMLNLLNKYEQKVFENWTKGVDEVCKTNLDQSLITRDDASKLIMVNFDPKLVSVLREVKYLQIRGEETIPESAASIYEKHETLRKYVANLDLTVAWYNKVRKTVLEVEFPLIEGQLADLDTRLRQAEADLNWTSDSVWEYIQETRDQVRDLEKRVQQTKDNVDRIKKIMAEWTKQPLFERKELKKESLLALDDRQDRLKKRYAEITTAGEKIHSLMKENLDLFKAEASSDIWKAYVDYVDDMVIDGFFNCIHCTLTYLLENTDPRHCAAPLFEARLELQVPDMIFNPSLDYGIADGFYDLVEMLISDTYKMASLVNRLAEHNGQEHYQADLEGMDDLSDVRNDLMDRVQTIMTKAQEYRNSFDNYAYLYVDDRKEFMRQFLLYNHVLTTEEIEAHAEDGVPECPPTLDQFKEQVDTYEKIYSEADEIEPEQVFDAWFRVDSKPFKAALLNIIKKWSFMFKQHLIDHVTNSLSELQEFIKVGNSGLTKTVEDGDYNGLVDCMGHLMAVKERQAATDEMFEPIKQTIELLKTYDQEMSEEVHTQLQELPEQWNNTKKIAITIKQQVAPLQANEVAIIRRKCTSFDVRQHEFRERFRKEAPFIFLFDGPYQCLDKCHSEIYEMEEHMAKLQESAGLFEVNMPDYKQLKACRREVRLLKGLWDLIMVVRTSIEDWKTTPWLEINVEQMEMDCKKFAKDIRSLDKEMRAWDAYNGLDATVKNMLTSLRAVSELQNPAIRERHWQQLMAATKVKFTMDKETTLSDLLALNLHNFEDEVRNIVDKAVKEMGMEKVLKELNTTWSSMDFDYEPHSRTGISLLKSNEELIETLEDNQVQLQNLMTSKHIAHFLEEVSGWQKKLSTTDSVITIWFEVQRTWSHLESIFIGSEDIRNQLPEDSKRFDGIDTDFKELAAEMEKTPNVVEATNKARLFDRLEAIQGSLVVCEKALAEYLETKRLAFPRFYFVSSADLLDILSQGNNPTQVQRHLSKLFDNMAKLKFKQDDEGNDTKLALGMYSKEGEYVDFDKECECTGQVEVWLNRVMDTMRSTVRSQFADAVVSYEEKPREQWLYDYPAQVALATTQVWWTTEVNISFARLEEGHENSMKDYNKKQILQLNTLIGLLIGKLTKGDRQKIMTICTIDVHARDVVAMMVLKKVDSAQAFQWLSQLRHRWADDDKHCYANICDAQFKYSYEYLGNTPRLVITPLTDRCYITLTQSLHLVMSGAPAGPAGTGKTETTKDLGRALGIMVYVFNCSEQMDYKSCGNIYKGLAQTGAWGCFDEFNRISVEVLSVVAVQVKCVQDAIRDKKERFNFMGEEISLIPSVGIFITMNPGYAGRTELPENLKALFRPCAMVVPDFELICEIMLVAEGFLEARLLARKFITLYTLCKELLSKQDHYDWGLRAIKSVLVVAGSLKRGDPQRPEDQVLMRALRDFNVPKIVSDDTPVFMGLIGDLFPALDVPRRRDLDFEKVVKQSTLDLKLQAEDSFVLKVVQLEELLAVRHSVFVIGNAGTGKSQVLKVLNKTYSNMKRKPVFIDLNPKAVTNDELFGIINPATREWKDGLFSVIMRDMSNITHDGPKWIVLDGDIDPMWIESLNTVMDDNKVLTLASNERIPLTPSMRLLFEISHLKTATPATVSRAGILYINPSDLGWNPIVTSWIDTREVQSERANLTILFDKYLPTLLDTLRIRFKKIIPIPEQSMVQMLCYLLECLLTPENTPADCPKELYELYFVFASIWAFGGSMFQDQLVDYRVEFSKWWITEFKTIKFPNQGTVFDYYIDQESKKFLPWSEKVPTFELDPEIPMQAVLVHTNETTRVRFFMDLLMERGRPVMLVGNAGLGKSVLVGDKLSNLGEDSMVANVPFNYYTTSEMLQRVLEKPLEKKAGRNYGPPGTKKLVYFIDDMNMPEVDTYGTVQPHTLIRQHMDYKHWYDRAKLTLKEIHKCQYVSCMNPTSGSFTINSRLQRHFCVFALSFPGQDALSTIYNSILSQHLANIAVSNALQKLSPTVVSATLDLHKKVAQSFLPTAIKFHYVFNLRDLSNVFQGLLYSGSDLLKSPIDFARLWMHECQRVYGDKMINDQDIEAFEKLVFEYAKKFFEDVDEEALKAKPNIHCHFATGIGDPKYMPCATWPELNKILVEALDTYNEINAVMNLVLFEDAMQHVCRINRILESPRGNALLVGVGGSGKQSLARLASYISSLEVFQITLRKGYGIPDLKLDLATVCMKAGLKNIGTVFLMTDAQVSDEKFLVLINDLLASGEIPDLFADDEVENIIGGVRNEVKGMGLQDTRENCWKFFIDRLRRQLKTVLCFSPVGTTLRVRSRKFPAVVNCTSIDWFHEWPQEALVSVSKRFLDEVELLKGDIKNSIAEFMAYVHVSVNESSKQYLTNERRYNYTTPKSFLEQIKLYESLLAMKSKELTAKMERLENGLTKLQSTAQQVDDLKAKLASQEVELAQKNEDADKLIQVVGVETEKVSKEKATVDDEEKKVAIINEEVSKKAKDCSEDLAKAEPALLAAQEALNTLNKNNLTELKSFGSPPSAVLKVAAAVMVLLAPNGKIPKDRSWKAAKVVMNKVDAFLDSLINYDEENIHENCQKAIKEYLNDPEFEPEYIKGKSLAAGGLCSWVVNIVKFYNVYCDVEPKRIALQKANDELKAAQDKLALIKAKIAELDANLAELTAQFEKATSDKLKCQQEAEATSRTITLANRLVGGLASENVRWGEAVANFKIQEKTLPGDVLLITAFVSYIGCFTKNYRVDLQDRMWLPFLKSQKDPIPITEGLDVLSMLTDDADIAVWNNEGLPSDRMSTENATILSNCQRWPLMIDPQLQGIKWIKQKYGDELRVIRIGQRGYLDTIENAISSGDTVLIENMEESIDPVLDPVLGRNTIKKGRYIKIGDKEVEYNPEFRLILQTKLANPHYKPEMQAQTTLINFTVTRDGLEDQLLANVVAQERPDLEKLKSDLTKQQNDFKIILKELEDNLLSRLSSAEGNFLGDTALVENLETTKRTAAEISVKVEEAKVTEVKINEARELYRPAAARASLLYFILNDLNKINPIYQFSLKAFNTVFSLSIARAEPCEDVKERVVNLIDCITYSVFIYTTRGLFEADKLIFTTQVAFQVLLMKKEIAQNELDFLLRFPIQVGLTSPVDFLTNSAWGAIKSLSAMEDFRNLDRDIEGSAKRWKKFVESECPEKEKFPQEWKNKSALQKLCMMRALRADRMSYAVRNFIEEKLGSKYVEGRQVEFAKSYEETDPATPVFFILSPGVDPLKDVEALGKKLGFTFDNNNFHNVSLGQGQEIVAEQCMDLAAKEGHWVILQNIHLVAKWLSTLEKKLEQYSIGSHESYRVYMSAEPAGSPESHIIPQGILESSIKITNEPPTGMFANLHKALYNFNQDTLEMCAREAEFKVILFALCYFHAVVCERQKFGPQGWNRSYPFNTGDLTISVNVLYNYLEANSKVPWQDLRYLFGEIMYGGHITDDWDRRLCRTYLEEYMAPEMLDGDLYLAPGFPVPPNSDYKGYHQYIDEILPPESPYLYGLHPNAEIGFLTTESDNLFKVVLELQPRDAGGGGGGGSSREEKIKSLLDEIVEKLPEEFNMMEIMGKVEDRTPYVVVAFQECERMNTLTSEIRRSLKELDLGLKGELTITPDMEDLSNALFLDQIPASWVKRAYPSLFGLSAWYADLLQRIKELEQWTADFALPNVVWLGGFFNPQSFLTAIMQSMARKNEWPLDKMCLQCDVTKKNKEDFSSAPREGSYVHGLFMEGARWDTQTNMIADARLKELAPNMPVIFIKAIPVDKQDTRNIYECPVYKTKQRGPTFVWTFNLKSKEKAAKWTLAGVALLLQV</sequence>
<protein>
    <recommendedName>
        <fullName>Dynein beta chain, ciliary</fullName>
    </recommendedName>
</protein>
<keyword id="KW-0067">ATP-binding</keyword>
<keyword id="KW-0966">Cell projection</keyword>
<keyword id="KW-0969">Cilium</keyword>
<keyword id="KW-0970">Cilium biogenesis/degradation</keyword>
<keyword id="KW-0175">Coiled coil</keyword>
<keyword id="KW-0963">Cytoplasm</keyword>
<keyword id="KW-0206">Cytoskeleton</keyword>
<keyword id="KW-0903">Direct protein sequencing</keyword>
<keyword id="KW-0243">Dynein</keyword>
<keyword id="KW-0282">Flagellum</keyword>
<keyword id="KW-0493">Microtubule</keyword>
<keyword id="KW-0505">Motor protein</keyword>
<keyword id="KW-0547">Nucleotide-binding</keyword>
<keyword id="KW-0677">Repeat</keyword>
<dbReference type="EMBL" id="D01021">
    <property type="protein sequence ID" value="BAA00827.1"/>
    <property type="molecule type" value="mRNA"/>
</dbReference>
<dbReference type="PIR" id="S17231">
    <property type="entry name" value="S17231"/>
</dbReference>
<dbReference type="SMR" id="P39057"/>
<dbReference type="GO" id="GO:0005737">
    <property type="term" value="C:cytoplasm"/>
    <property type="evidence" value="ECO:0007669"/>
    <property type="project" value="UniProtKB-KW"/>
</dbReference>
<dbReference type="GO" id="GO:0030286">
    <property type="term" value="C:dynein complex"/>
    <property type="evidence" value="ECO:0007669"/>
    <property type="project" value="UniProtKB-KW"/>
</dbReference>
<dbReference type="GO" id="GO:0005874">
    <property type="term" value="C:microtubule"/>
    <property type="evidence" value="ECO:0007669"/>
    <property type="project" value="UniProtKB-KW"/>
</dbReference>
<dbReference type="GO" id="GO:0031514">
    <property type="term" value="C:motile cilium"/>
    <property type="evidence" value="ECO:0007669"/>
    <property type="project" value="UniProtKB-SubCell"/>
</dbReference>
<dbReference type="GO" id="GO:0005524">
    <property type="term" value="F:ATP binding"/>
    <property type="evidence" value="ECO:0007669"/>
    <property type="project" value="UniProtKB-KW"/>
</dbReference>
<dbReference type="GO" id="GO:0045505">
    <property type="term" value="F:dynein intermediate chain binding"/>
    <property type="evidence" value="ECO:0007669"/>
    <property type="project" value="InterPro"/>
</dbReference>
<dbReference type="GO" id="GO:0051959">
    <property type="term" value="F:dynein light intermediate chain binding"/>
    <property type="evidence" value="ECO:0007669"/>
    <property type="project" value="InterPro"/>
</dbReference>
<dbReference type="GO" id="GO:0008569">
    <property type="term" value="F:minus-end-directed microtubule motor activity"/>
    <property type="evidence" value="ECO:0007669"/>
    <property type="project" value="InterPro"/>
</dbReference>
<dbReference type="GO" id="GO:0030030">
    <property type="term" value="P:cell projection organization"/>
    <property type="evidence" value="ECO:0007669"/>
    <property type="project" value="UniProtKB-KW"/>
</dbReference>
<dbReference type="GO" id="GO:0007018">
    <property type="term" value="P:microtubule-based movement"/>
    <property type="evidence" value="ECO:0007669"/>
    <property type="project" value="InterPro"/>
</dbReference>
<dbReference type="FunFam" id="3.40.50.300:FF:001810">
    <property type="entry name" value="Cytoplasmic dynein 2 heavy chain 1"/>
    <property type="match status" value="1"/>
</dbReference>
<dbReference type="FunFam" id="1.10.287.2620:FF:000004">
    <property type="entry name" value="Dynein axonemal heavy chain 17"/>
    <property type="match status" value="1"/>
</dbReference>
<dbReference type="FunFam" id="1.20.1270.280:FF:000003">
    <property type="entry name" value="Dynein axonemal heavy chain 17"/>
    <property type="match status" value="1"/>
</dbReference>
<dbReference type="FunFam" id="1.20.920.20:FF:000003">
    <property type="entry name" value="Dynein axonemal heavy chain 17"/>
    <property type="match status" value="1"/>
</dbReference>
<dbReference type="FunFam" id="1.20.920.30:FF:000003">
    <property type="entry name" value="Dynein axonemal heavy chain 17"/>
    <property type="match status" value="1"/>
</dbReference>
<dbReference type="FunFam" id="3.10.490.20:FF:000002">
    <property type="entry name" value="Dynein axonemal heavy chain 17"/>
    <property type="match status" value="1"/>
</dbReference>
<dbReference type="FunFam" id="3.40.50.300:FF:000219">
    <property type="entry name" value="Dynein axonemal heavy chain 17"/>
    <property type="match status" value="1"/>
</dbReference>
<dbReference type="FunFam" id="3.40.50.300:FF:000682">
    <property type="entry name" value="Dynein axonemal heavy chain 17"/>
    <property type="match status" value="1"/>
</dbReference>
<dbReference type="FunFam" id="1.10.8.1220:FF:000001">
    <property type="entry name" value="Dynein axonemal heavy chain 5"/>
    <property type="match status" value="1"/>
</dbReference>
<dbReference type="FunFam" id="3.20.180.20:FF:000001">
    <property type="entry name" value="Dynein axonemal heavy chain 5"/>
    <property type="match status" value="1"/>
</dbReference>
<dbReference type="FunFam" id="1.20.140.100:FF:000007">
    <property type="entry name" value="Dynein axonemal heavy chain 9"/>
    <property type="match status" value="1"/>
</dbReference>
<dbReference type="FunFam" id="1.10.8.710:FF:000002">
    <property type="entry name" value="dynein heavy chain 17, axonemal"/>
    <property type="match status" value="1"/>
</dbReference>
<dbReference type="FunFam" id="3.40.50.300:FF:000411">
    <property type="entry name" value="dynein heavy chain 17, axonemal"/>
    <property type="match status" value="1"/>
</dbReference>
<dbReference type="FunFam" id="1.10.8.720:FF:000002">
    <property type="entry name" value="Dynein heavy chain 9, axonemal"/>
    <property type="match status" value="1"/>
</dbReference>
<dbReference type="FunFam" id="1.20.58.1120:FF:000002">
    <property type="entry name" value="Dynein heavy chain 9, axonemal"/>
    <property type="match status" value="1"/>
</dbReference>
<dbReference type="FunFam" id="3.40.50.300:FF:000049">
    <property type="entry name" value="Dynein, axonemal, heavy chain 5"/>
    <property type="match status" value="1"/>
</dbReference>
<dbReference type="FunFam" id="1.10.472.130:FF:000001">
    <property type="entry name" value="Dynein, axonemal, heavy chain 9"/>
    <property type="match status" value="1"/>
</dbReference>
<dbReference type="Gene3D" id="1.10.287.2620">
    <property type="match status" value="1"/>
</dbReference>
<dbReference type="Gene3D" id="1.10.472.130">
    <property type="match status" value="1"/>
</dbReference>
<dbReference type="Gene3D" id="1.10.8.1220">
    <property type="match status" value="1"/>
</dbReference>
<dbReference type="Gene3D" id="1.10.8.710">
    <property type="match status" value="1"/>
</dbReference>
<dbReference type="Gene3D" id="1.20.1270.280">
    <property type="match status" value="1"/>
</dbReference>
<dbReference type="Gene3D" id="1.20.58.1120">
    <property type="match status" value="1"/>
</dbReference>
<dbReference type="Gene3D" id="1.20.920.20">
    <property type="match status" value="1"/>
</dbReference>
<dbReference type="Gene3D" id="1.20.920.30">
    <property type="match status" value="1"/>
</dbReference>
<dbReference type="Gene3D" id="3.10.490.20">
    <property type="match status" value="1"/>
</dbReference>
<dbReference type="Gene3D" id="6.10.140.1060">
    <property type="match status" value="1"/>
</dbReference>
<dbReference type="Gene3D" id="1.20.140.100">
    <property type="entry name" value="Dynein heavy chain, N-terminal domain 2"/>
    <property type="match status" value="1"/>
</dbReference>
<dbReference type="Gene3D" id="3.20.180.20">
    <property type="entry name" value="Dynein heavy chain, N-terminal domain 2"/>
    <property type="match status" value="1"/>
</dbReference>
<dbReference type="Gene3D" id="3.40.50.300">
    <property type="entry name" value="P-loop containing nucleotide triphosphate hydrolases"/>
    <property type="match status" value="5"/>
</dbReference>
<dbReference type="Gene3D" id="1.10.8.720">
    <property type="entry name" value="Region D6 of dynein motor"/>
    <property type="match status" value="1"/>
</dbReference>
<dbReference type="InterPro" id="IPR035699">
    <property type="entry name" value="AAA_6"/>
</dbReference>
<dbReference type="InterPro" id="IPR035706">
    <property type="entry name" value="AAA_9"/>
</dbReference>
<dbReference type="InterPro" id="IPR041658">
    <property type="entry name" value="AAA_lid_11"/>
</dbReference>
<dbReference type="InterPro" id="IPR042219">
    <property type="entry name" value="AAA_lid_11_sf"/>
</dbReference>
<dbReference type="InterPro" id="IPR026983">
    <property type="entry name" value="DHC"/>
</dbReference>
<dbReference type="InterPro" id="IPR041589">
    <property type="entry name" value="DNAH3_AAA_lid_1"/>
</dbReference>
<dbReference type="InterPro" id="IPR042222">
    <property type="entry name" value="Dynein_2_N"/>
</dbReference>
<dbReference type="InterPro" id="IPR043157">
    <property type="entry name" value="Dynein_AAA1S"/>
</dbReference>
<dbReference type="InterPro" id="IPR041466">
    <property type="entry name" value="Dynein_AAA5_ext"/>
</dbReference>
<dbReference type="InterPro" id="IPR041228">
    <property type="entry name" value="Dynein_C"/>
</dbReference>
<dbReference type="InterPro" id="IPR043160">
    <property type="entry name" value="Dynein_C_barrel"/>
</dbReference>
<dbReference type="InterPro" id="IPR024743">
    <property type="entry name" value="Dynein_HC_stalk"/>
</dbReference>
<dbReference type="InterPro" id="IPR024317">
    <property type="entry name" value="Dynein_heavy_chain_D4_dom"/>
</dbReference>
<dbReference type="InterPro" id="IPR004273">
    <property type="entry name" value="Dynein_heavy_D6_P-loop"/>
</dbReference>
<dbReference type="InterPro" id="IPR013602">
    <property type="entry name" value="Dynein_heavy_linker"/>
</dbReference>
<dbReference type="InterPro" id="IPR013594">
    <property type="entry name" value="Dynein_heavy_tail"/>
</dbReference>
<dbReference type="InterPro" id="IPR042228">
    <property type="entry name" value="Dynein_linker_3"/>
</dbReference>
<dbReference type="InterPro" id="IPR027417">
    <property type="entry name" value="P-loop_NTPase"/>
</dbReference>
<dbReference type="PANTHER" id="PTHR45703:SF4">
    <property type="entry name" value="DYNEIN AXONEMAL HEAVY CHAIN 17"/>
    <property type="match status" value="1"/>
</dbReference>
<dbReference type="PANTHER" id="PTHR45703">
    <property type="entry name" value="DYNEIN HEAVY CHAIN"/>
    <property type="match status" value="1"/>
</dbReference>
<dbReference type="Pfam" id="PF12774">
    <property type="entry name" value="AAA_6"/>
    <property type="match status" value="1"/>
</dbReference>
<dbReference type="Pfam" id="PF12775">
    <property type="entry name" value="AAA_7"/>
    <property type="match status" value="1"/>
</dbReference>
<dbReference type="Pfam" id="PF12780">
    <property type="entry name" value="AAA_8"/>
    <property type="match status" value="1"/>
</dbReference>
<dbReference type="Pfam" id="PF12781">
    <property type="entry name" value="AAA_9"/>
    <property type="match status" value="1"/>
</dbReference>
<dbReference type="Pfam" id="PF17857">
    <property type="entry name" value="AAA_lid_1"/>
    <property type="match status" value="1"/>
</dbReference>
<dbReference type="Pfam" id="PF18198">
    <property type="entry name" value="AAA_lid_11"/>
    <property type="match status" value="1"/>
</dbReference>
<dbReference type="Pfam" id="PF08385">
    <property type="entry name" value="DHC_N1"/>
    <property type="match status" value="1"/>
</dbReference>
<dbReference type="Pfam" id="PF08393">
    <property type="entry name" value="DHC_N2"/>
    <property type="match status" value="1"/>
</dbReference>
<dbReference type="Pfam" id="PF17852">
    <property type="entry name" value="Dynein_AAA_lid"/>
    <property type="match status" value="1"/>
</dbReference>
<dbReference type="Pfam" id="PF18199">
    <property type="entry name" value="Dynein_C"/>
    <property type="match status" value="1"/>
</dbReference>
<dbReference type="Pfam" id="PF03028">
    <property type="entry name" value="Dynein_heavy"/>
    <property type="match status" value="1"/>
</dbReference>
<dbReference type="Pfam" id="PF12777">
    <property type="entry name" value="MT"/>
    <property type="match status" value="1"/>
</dbReference>
<dbReference type="SUPFAM" id="SSF52540">
    <property type="entry name" value="P-loop containing nucleoside triphosphate hydrolases"/>
    <property type="match status" value="4"/>
</dbReference>
<reference key="1">
    <citation type="journal article" date="1991" name="Nature">
        <title>Four ATP-binding sites in the midregion of the beta heavy chain of dynein.</title>
        <authorList>
            <person name="Ogawa K."/>
        </authorList>
    </citation>
    <scope>NUCLEOTIDE SEQUENCE [MRNA]</scope>
    <scope>PROTEIN SEQUENCE OF 1192-1204 AND 3324-3340</scope>
    <source>
        <tissue>Egg</tissue>
        <tissue>Sperm</tissue>
    </source>
</reference>